<sequence length="412" mass="44184">MEYTTLAVLAGLPEDPHGAVGLPIYAVAAYGFKTLEEGQERFATGEGYVYARQKDPTAKALEERLKALEGALEAVVLASGQAATFAALLALLRPGDEVVAAKGLFGQTIGLFGQVLSLMGVTVRYVDPEPEAVREALSAKTRAVFVETVANPALLVPDLEALATLAEEAGVALVVDNTFGAAGALCRPLAWGAHVVVESLTKWASGHGSVLGGAVLSRETELWRNYPQFLQPDLKGQIPWEALRARCFPERVRTLGLSLCGMALSPFNAYLLFQGLETVALRVARMSETARFLAERLQGHPKVKALRYPGLPEDPAHRNARKYLASGGPILTLDLGDLERASRFLGAIRLLKAANLGDARTLLVHPWTTTHSRLKEEARLQAGVTPGLVRVSVGLEDPLDLLALFEEALEAV</sequence>
<evidence type="ECO:0000269" key="1">
    <source>
    </source>
</evidence>
<evidence type="ECO:0000269" key="2">
    <source ref="3"/>
</evidence>
<evidence type="ECO:0000303" key="3">
    <source>
    </source>
</evidence>
<evidence type="ECO:0000305" key="4"/>
<evidence type="ECO:0000305" key="5">
    <source>
    </source>
</evidence>
<evidence type="ECO:0000312" key="6">
    <source>
        <dbReference type="EMBL" id="BAD70979.1"/>
    </source>
</evidence>
<evidence type="ECO:0007744" key="7">
    <source>
        <dbReference type="PDB" id="2CB1"/>
    </source>
</evidence>
<evidence type="ECO:0007829" key="8">
    <source>
        <dbReference type="PDB" id="2CB1"/>
    </source>
</evidence>
<feature type="chain" id="PRO_0000445421" description="O-acetyl-L-homoserine sulfhydrylase 2">
    <location>
        <begin position="1"/>
        <end position="412"/>
    </location>
</feature>
<feature type="modified residue" description="N6-(pyridoxal phosphate)lysine" evidence="2 7">
    <location>
        <position position="202"/>
    </location>
</feature>
<feature type="helix" evidence="8">
    <location>
        <begin position="3"/>
        <end position="9"/>
    </location>
</feature>
<feature type="helix" evidence="8">
    <location>
        <begin position="35"/>
        <end position="44"/>
    </location>
</feature>
<feature type="turn" evidence="8">
    <location>
        <begin position="51"/>
        <end position="53"/>
    </location>
</feature>
<feature type="helix" evidence="8">
    <location>
        <begin position="56"/>
        <end position="69"/>
    </location>
</feature>
<feature type="strand" evidence="8">
    <location>
        <begin position="72"/>
        <end position="79"/>
    </location>
</feature>
<feature type="helix" evidence="8">
    <location>
        <begin position="80"/>
        <end position="89"/>
    </location>
</feature>
<feature type="strand" evidence="8">
    <location>
        <begin position="97"/>
        <end position="101"/>
    </location>
</feature>
<feature type="helix" evidence="8">
    <location>
        <begin position="106"/>
        <end position="114"/>
    </location>
</feature>
<feature type="turn" evidence="8">
    <location>
        <begin position="115"/>
        <end position="120"/>
    </location>
</feature>
<feature type="strand" evidence="8">
    <location>
        <begin position="122"/>
        <end position="126"/>
    </location>
</feature>
<feature type="helix" evidence="8">
    <location>
        <begin position="130"/>
        <end position="136"/>
    </location>
</feature>
<feature type="strand" evidence="8">
    <location>
        <begin position="141"/>
        <end position="149"/>
    </location>
</feature>
<feature type="turn" evidence="8">
    <location>
        <begin position="151"/>
        <end position="153"/>
    </location>
</feature>
<feature type="helix" evidence="8">
    <location>
        <begin position="159"/>
        <end position="169"/>
    </location>
</feature>
<feature type="strand" evidence="8">
    <location>
        <begin position="172"/>
        <end position="176"/>
    </location>
</feature>
<feature type="helix" evidence="8">
    <location>
        <begin position="178"/>
        <end position="180"/>
    </location>
</feature>
<feature type="turn" evidence="8">
    <location>
        <begin position="181"/>
        <end position="184"/>
    </location>
</feature>
<feature type="helix" evidence="8">
    <location>
        <begin position="188"/>
        <end position="191"/>
    </location>
</feature>
<feature type="strand" evidence="8">
    <location>
        <begin position="194"/>
        <end position="199"/>
    </location>
</feature>
<feature type="turn" evidence="8">
    <location>
        <begin position="200"/>
        <end position="205"/>
    </location>
</feature>
<feature type="strand" evidence="8">
    <location>
        <begin position="213"/>
        <end position="217"/>
    </location>
</feature>
<feature type="helix" evidence="8">
    <location>
        <begin position="222"/>
        <end position="225"/>
    </location>
</feature>
<feature type="helix" evidence="8">
    <location>
        <begin position="227"/>
        <end position="230"/>
    </location>
</feature>
<feature type="helix" evidence="8">
    <location>
        <begin position="240"/>
        <end position="243"/>
    </location>
</feature>
<feature type="helix" evidence="8">
    <location>
        <begin position="244"/>
        <end position="246"/>
    </location>
</feature>
<feature type="helix" evidence="8">
    <location>
        <begin position="247"/>
        <end position="256"/>
    </location>
</feature>
<feature type="turn" evidence="8">
    <location>
        <begin position="257"/>
        <end position="260"/>
    </location>
</feature>
<feature type="helix" evidence="8">
    <location>
        <begin position="266"/>
        <end position="275"/>
    </location>
</feature>
<feature type="helix" evidence="8">
    <location>
        <begin position="276"/>
        <end position="278"/>
    </location>
</feature>
<feature type="helix" evidence="8">
    <location>
        <begin position="279"/>
        <end position="298"/>
    </location>
</feature>
<feature type="strand" evidence="8">
    <location>
        <begin position="304"/>
        <end position="307"/>
    </location>
</feature>
<feature type="helix" evidence="8">
    <location>
        <begin position="317"/>
        <end position="323"/>
    </location>
</feature>
<feature type="strand" evidence="8">
    <location>
        <begin position="325"/>
        <end position="327"/>
    </location>
</feature>
<feature type="strand" evidence="8">
    <location>
        <begin position="329"/>
        <end position="334"/>
    </location>
</feature>
<feature type="helix" evidence="8">
    <location>
        <begin position="338"/>
        <end position="347"/>
    </location>
</feature>
<feature type="strand" evidence="8">
    <location>
        <begin position="349"/>
        <end position="352"/>
    </location>
</feature>
<feature type="strand" evidence="8">
    <location>
        <begin position="362"/>
        <end position="364"/>
    </location>
</feature>
<feature type="turn" evidence="8">
    <location>
        <begin position="366"/>
        <end position="373"/>
    </location>
</feature>
<feature type="helix" evidence="8">
    <location>
        <begin position="376"/>
        <end position="381"/>
    </location>
</feature>
<feature type="strand" evidence="8">
    <location>
        <begin position="388"/>
        <end position="392"/>
    </location>
</feature>
<feature type="helix" evidence="8">
    <location>
        <begin position="398"/>
        <end position="410"/>
    </location>
</feature>
<protein>
    <recommendedName>
        <fullName evidence="3">O-acetyl-L-homoserine sulfhydrylase 2</fullName>
        <shortName evidence="3">OAH-sulfhydrylase 2</shortName>
        <ecNumber evidence="1">2.5.1.-</ecNumber>
    </recommendedName>
</protein>
<accession>Q5SJ58</accession>
<accession>Q76K51</accession>
<name>METY2_THET8</name>
<organism>
    <name type="scientific">Thermus thermophilus (strain ATCC 27634 / DSM 579 / HB8)</name>
    <dbReference type="NCBI Taxonomy" id="300852"/>
    <lineage>
        <taxon>Bacteria</taxon>
        <taxon>Thermotogati</taxon>
        <taxon>Deinococcota</taxon>
        <taxon>Deinococci</taxon>
        <taxon>Thermales</taxon>
        <taxon>Thermaceae</taxon>
        <taxon>Thermus</taxon>
    </lineage>
</organism>
<dbReference type="EC" id="2.5.1.-" evidence="1"/>
<dbReference type="EMBL" id="AB094564">
    <property type="protein sequence ID" value="BAD02479.1"/>
    <property type="molecule type" value="Genomic_DNA"/>
</dbReference>
<dbReference type="EMBL" id="AP008226">
    <property type="protein sequence ID" value="BAD70979.1"/>
    <property type="molecule type" value="Genomic_DNA"/>
</dbReference>
<dbReference type="RefSeq" id="WP_011228474.1">
    <property type="nucleotide sequence ID" value="NC_006461.1"/>
</dbReference>
<dbReference type="RefSeq" id="YP_144422.1">
    <property type="nucleotide sequence ID" value="NC_006461.1"/>
</dbReference>
<dbReference type="PDB" id="2CB1">
    <property type="method" value="X-ray"/>
    <property type="resolution" value="2.00 A"/>
    <property type="chains" value="A=1-412"/>
</dbReference>
<dbReference type="PDBsum" id="2CB1"/>
<dbReference type="SMR" id="Q5SJ58"/>
<dbReference type="EnsemblBacteria" id="BAD70979">
    <property type="protein sequence ID" value="BAD70979"/>
    <property type="gene ID" value="BAD70979"/>
</dbReference>
<dbReference type="GeneID" id="3168441"/>
<dbReference type="KEGG" id="ttj:TTHA1156"/>
<dbReference type="PATRIC" id="fig|300852.9.peg.1136"/>
<dbReference type="eggNOG" id="COG2873">
    <property type="taxonomic scope" value="Bacteria"/>
</dbReference>
<dbReference type="HOGENOM" id="CLU_018986_4_0_0"/>
<dbReference type="PhylomeDB" id="Q5SJ58"/>
<dbReference type="BRENDA" id="2.5.1.49">
    <property type="organism ID" value="2305"/>
</dbReference>
<dbReference type="EvolutionaryTrace" id="Q5SJ58"/>
<dbReference type="Proteomes" id="UP000000532">
    <property type="component" value="Chromosome"/>
</dbReference>
<dbReference type="GO" id="GO:0005737">
    <property type="term" value="C:cytoplasm"/>
    <property type="evidence" value="ECO:0007669"/>
    <property type="project" value="TreeGrafter"/>
</dbReference>
<dbReference type="GO" id="GO:0004124">
    <property type="term" value="F:cysteine synthase activity"/>
    <property type="evidence" value="ECO:0007669"/>
    <property type="project" value="TreeGrafter"/>
</dbReference>
<dbReference type="GO" id="GO:0051009">
    <property type="term" value="F:O-acetylhomoserine sulfhydrylase activity"/>
    <property type="evidence" value="ECO:0007669"/>
    <property type="project" value="RHEA"/>
</dbReference>
<dbReference type="GO" id="GO:0030170">
    <property type="term" value="F:pyridoxal phosphate binding"/>
    <property type="evidence" value="ECO:0007669"/>
    <property type="project" value="InterPro"/>
</dbReference>
<dbReference type="GO" id="GO:0006535">
    <property type="term" value="P:cysteine biosynthetic process from serine"/>
    <property type="evidence" value="ECO:0007669"/>
    <property type="project" value="TreeGrafter"/>
</dbReference>
<dbReference type="GO" id="GO:0071269">
    <property type="term" value="P:L-homocysteine biosynthetic process"/>
    <property type="evidence" value="ECO:0007669"/>
    <property type="project" value="TreeGrafter"/>
</dbReference>
<dbReference type="GO" id="GO:0019346">
    <property type="term" value="P:transsulfuration"/>
    <property type="evidence" value="ECO:0007669"/>
    <property type="project" value="InterPro"/>
</dbReference>
<dbReference type="FunFam" id="3.40.640.10:FF:000046">
    <property type="entry name" value="Cystathionine gamma-lyase"/>
    <property type="match status" value="1"/>
</dbReference>
<dbReference type="Gene3D" id="3.90.1150.10">
    <property type="entry name" value="Aspartate Aminotransferase, domain 1"/>
    <property type="match status" value="1"/>
</dbReference>
<dbReference type="Gene3D" id="3.40.640.10">
    <property type="entry name" value="Type I PLP-dependent aspartate aminotransferase-like (Major domain)"/>
    <property type="match status" value="1"/>
</dbReference>
<dbReference type="InterPro" id="IPR000277">
    <property type="entry name" value="Cys/Met-Metab_PyrdxlP-dep_enz"/>
</dbReference>
<dbReference type="InterPro" id="IPR006235">
    <property type="entry name" value="OAc-hSer/O-AcSer_sulfhydrylase"/>
</dbReference>
<dbReference type="InterPro" id="IPR015424">
    <property type="entry name" value="PyrdxlP-dep_Trfase"/>
</dbReference>
<dbReference type="InterPro" id="IPR015421">
    <property type="entry name" value="PyrdxlP-dep_Trfase_major"/>
</dbReference>
<dbReference type="InterPro" id="IPR015422">
    <property type="entry name" value="PyrdxlP-dep_Trfase_small"/>
</dbReference>
<dbReference type="PANTHER" id="PTHR43797">
    <property type="entry name" value="HOMOCYSTEINE/CYSTEINE SYNTHASE"/>
    <property type="match status" value="1"/>
</dbReference>
<dbReference type="PANTHER" id="PTHR43797:SF2">
    <property type="entry name" value="HOMOCYSTEINE_CYSTEINE SYNTHASE"/>
    <property type="match status" value="1"/>
</dbReference>
<dbReference type="Pfam" id="PF01053">
    <property type="entry name" value="Cys_Met_Meta_PP"/>
    <property type="match status" value="1"/>
</dbReference>
<dbReference type="PIRSF" id="PIRSF001434">
    <property type="entry name" value="CGS"/>
    <property type="match status" value="1"/>
</dbReference>
<dbReference type="SUPFAM" id="SSF53383">
    <property type="entry name" value="PLP-dependent transferases"/>
    <property type="match status" value="1"/>
</dbReference>
<keyword id="KW-0002">3D-structure</keyword>
<keyword id="KW-0028">Amino-acid biosynthesis</keyword>
<keyword id="KW-0486">Methionine biosynthesis</keyword>
<keyword id="KW-0663">Pyridoxal phosphate</keyword>
<keyword id="KW-1185">Reference proteome</keyword>
<keyword id="KW-0808">Transferase</keyword>
<proteinExistence type="evidence at protein level"/>
<gene>
    <name evidence="3" type="primary">oah2</name>
    <name evidence="6" type="ordered locus">TTHA1156</name>
</gene>
<comment type="function">
    <text evidence="1">Catalyzes the conversion of O-acetyl-L-homoserine (OAH) into homocysteine in the methionine biosynthesis pathway. Has weak activity with O-acetyl-L-serine, O-phospho-L-serine, L-serine, O-succinyl-L-homoserine and L-homoserine. Shows a very low CTT gamma-synthase activity.</text>
</comment>
<comment type="catalytic activity">
    <reaction evidence="1">
        <text>O-acetyl-L-homoserine + hydrogen sulfide = L-homocysteine + acetate</text>
        <dbReference type="Rhea" id="RHEA:27822"/>
        <dbReference type="ChEBI" id="CHEBI:29919"/>
        <dbReference type="ChEBI" id="CHEBI:30089"/>
        <dbReference type="ChEBI" id="CHEBI:57716"/>
        <dbReference type="ChEBI" id="CHEBI:58199"/>
    </reaction>
</comment>
<comment type="cofactor">
    <cofactor evidence="2 5">
        <name>pyridoxal 5'-phosphate</name>
        <dbReference type="ChEBI" id="CHEBI:597326"/>
    </cofactor>
</comment>
<comment type="activity regulation">
    <text evidence="1">Inhibited by the carbonyl reagents hydroxylamine and phenylhydrazine. Also inhibited by methionine and propargylglycine.</text>
</comment>
<comment type="biophysicochemical properties">
    <kinetics>
        <KM evidence="1">2 mM for O-acetyl-L-homoserine</KM>
        <Vmax evidence="1">126.0 umol/min/mg enzyme</Vmax>
    </kinetics>
    <phDependence>
        <text evidence="1">Optimum pH is 7.5.</text>
    </phDependence>
    <temperatureDependence>
        <text evidence="1">Optimum temperature is 70 degrees Celsius. Stable at high temperature. 80% of the activity is retained after treatment at 90 degrees Celsius for 60 minutes.</text>
    </temperatureDependence>
</comment>
<comment type="subunit">
    <text evidence="1">Homotetramer.</text>
</comment>
<comment type="similarity">
    <text evidence="4">Belongs to the trans-sulfuration enzymes family.</text>
</comment>
<reference key="1">
    <citation type="journal article" date="2004" name="Biosci. Biotechnol. Biochem.">
        <title>Comparative characterization of the oah2 gene homologous to the oah1 of Thermus thermophilus HB8.</title>
        <authorList>
            <person name="Iwama T."/>
            <person name="Hosokawa H."/>
            <person name="Lin W."/>
            <person name="Shimizu H."/>
            <person name="Kawai K."/>
            <person name="Yamagata S."/>
        </authorList>
    </citation>
    <scope>NUCLEOTIDE SEQUENCE [GENOMIC DNA]</scope>
    <scope>FUNCTION</scope>
    <scope>CATALYTIC ACTIVITY</scope>
    <scope>COFACTOR</scope>
    <scope>ACTIVITY REGULATION</scope>
    <scope>BIOPHYSICOCHEMICAL PROPERTIES</scope>
    <scope>SUBUNIT</scope>
    <source>
        <strain>ATCC 27634 / DSM 579 / HB8</strain>
    </source>
</reference>
<reference key="2">
    <citation type="submission" date="2004-11" db="EMBL/GenBank/DDBJ databases">
        <title>Complete genome sequence of Thermus thermophilus HB8.</title>
        <authorList>
            <person name="Masui R."/>
            <person name="Kurokawa K."/>
            <person name="Nakagawa N."/>
            <person name="Tokunaga F."/>
            <person name="Koyama Y."/>
            <person name="Shibata T."/>
            <person name="Oshima T."/>
            <person name="Yokoyama S."/>
            <person name="Yasunaga T."/>
            <person name="Kuramitsu S."/>
        </authorList>
    </citation>
    <scope>NUCLEOTIDE SEQUENCE [LARGE SCALE GENOMIC DNA]</scope>
    <source>
        <strain>ATCC 27634 / DSM 579 / HB8</strain>
    </source>
</reference>
<reference evidence="7" key="3">
    <citation type="submission" date="2005-12" db="PDB data bank">
        <title>The crystal structure of O-acetyl homoserine sulfhydrylase.</title>
        <authorList>
            <person name="Agari Y."/>
            <person name="Satoh S."/>
            <person name="Tsuge H."/>
            <person name="Imagawa T."/>
            <person name="Utsunomiya H."/>
        </authorList>
    </citation>
    <scope>X-RAY CRYSTALLOGRAPHY (2.00 ANGSTROMS)</scope>
    <scope>PYRIDOXAL PHOSPHATE AT LYS-202</scope>
    <scope>COFACTOR</scope>
</reference>